<dbReference type="EC" id="2.3.1.195"/>
<dbReference type="EMBL" id="AF500201">
    <property type="protein sequence ID" value="AAN09797.1"/>
    <property type="molecule type" value="mRNA"/>
</dbReference>
<dbReference type="EMBL" id="AC009895">
    <property type="protein sequence ID" value="AAF01587.1"/>
    <property type="molecule type" value="Genomic_DNA"/>
</dbReference>
<dbReference type="EMBL" id="CP002686">
    <property type="protein sequence ID" value="AEE73949.1"/>
    <property type="molecule type" value="Genomic_DNA"/>
</dbReference>
<dbReference type="EMBL" id="AY084623">
    <property type="protein sequence ID" value="AAM61186.1"/>
    <property type="molecule type" value="mRNA"/>
</dbReference>
<dbReference type="RefSeq" id="NP_186998.1">
    <property type="nucleotide sequence ID" value="NM_111219.3"/>
</dbReference>
<dbReference type="SMR" id="Q9SRQ2"/>
<dbReference type="STRING" id="3702.Q9SRQ2"/>
<dbReference type="PaxDb" id="3702-AT3G03480.1"/>
<dbReference type="ProteomicsDB" id="222076"/>
<dbReference type="EnsemblPlants" id="AT3G03480.1">
    <property type="protein sequence ID" value="AT3G03480.1"/>
    <property type="gene ID" value="AT3G03480"/>
</dbReference>
<dbReference type="GeneID" id="821249"/>
<dbReference type="Gramene" id="AT3G03480.1">
    <property type="protein sequence ID" value="AT3G03480.1"/>
    <property type="gene ID" value="AT3G03480"/>
</dbReference>
<dbReference type="KEGG" id="ath:AT3G03480"/>
<dbReference type="Araport" id="AT3G03480"/>
<dbReference type="TAIR" id="AT3G03480">
    <property type="gene designation" value="CHAT"/>
</dbReference>
<dbReference type="eggNOG" id="ENOG502QV0F">
    <property type="taxonomic scope" value="Eukaryota"/>
</dbReference>
<dbReference type="HOGENOM" id="CLU_014546_2_2_1"/>
<dbReference type="InParanoid" id="Q9SRQ2"/>
<dbReference type="OMA" id="SFKVHRQ"/>
<dbReference type="OrthoDB" id="1483986at2759"/>
<dbReference type="PhylomeDB" id="Q9SRQ2"/>
<dbReference type="BioCyc" id="ARA:AT3G03480-MONOMER"/>
<dbReference type="BioCyc" id="MetaCyc:AT3G03480-MONOMER"/>
<dbReference type="BRENDA" id="2.3.1.195">
    <property type="organism ID" value="399"/>
</dbReference>
<dbReference type="SABIO-RK" id="Q9SRQ2"/>
<dbReference type="PRO" id="PR:Q9SRQ2"/>
<dbReference type="Proteomes" id="UP000006548">
    <property type="component" value="Chromosome 3"/>
</dbReference>
<dbReference type="ExpressionAtlas" id="Q9SRQ2">
    <property type="expression patterns" value="baseline and differential"/>
</dbReference>
<dbReference type="GO" id="GO:0102165">
    <property type="term" value="F:(Z)-3-hexen-1-ol acetyltransferase activity"/>
    <property type="evidence" value="ECO:0007669"/>
    <property type="project" value="UniProtKB-EC"/>
</dbReference>
<dbReference type="GO" id="GO:0010327">
    <property type="term" value="F:acetyl CoA:(Z)-3-hexen-1-ol acetyltransferase activity"/>
    <property type="evidence" value="ECO:0000314"/>
    <property type="project" value="TAIR"/>
</dbReference>
<dbReference type="GO" id="GO:0010597">
    <property type="term" value="P:green leaf volatile biosynthetic process"/>
    <property type="evidence" value="ECO:0000304"/>
    <property type="project" value="TAIR"/>
</dbReference>
<dbReference type="FunFam" id="3.30.559.10:FF:000107">
    <property type="entry name" value="Chat-3-HEXEN-1-OL ACETYLTRANSFERASE"/>
    <property type="match status" value="1"/>
</dbReference>
<dbReference type="FunFam" id="3.30.559.10:FF:000015">
    <property type="entry name" value="Spermidine hydroxycinnamoyl transferase"/>
    <property type="match status" value="1"/>
</dbReference>
<dbReference type="Gene3D" id="3.30.559.10">
    <property type="entry name" value="Chloramphenicol acetyltransferase-like domain"/>
    <property type="match status" value="2"/>
</dbReference>
<dbReference type="InterPro" id="IPR023213">
    <property type="entry name" value="CAT-like_dom_sf"/>
</dbReference>
<dbReference type="InterPro" id="IPR050898">
    <property type="entry name" value="Plant_acyltransferase"/>
</dbReference>
<dbReference type="PANTHER" id="PTHR31147">
    <property type="entry name" value="ACYL TRANSFERASE 4"/>
    <property type="match status" value="1"/>
</dbReference>
<dbReference type="PANTHER" id="PTHR31147:SF66">
    <property type="entry name" value="OS05G0315700 PROTEIN"/>
    <property type="match status" value="1"/>
</dbReference>
<dbReference type="Pfam" id="PF02458">
    <property type="entry name" value="Transferase"/>
    <property type="match status" value="1"/>
</dbReference>
<feature type="chain" id="PRO_0000409589" description="(Z)-3-hexen-1-ol acetyltransferase">
    <location>
        <begin position="1"/>
        <end position="454"/>
    </location>
</feature>
<feature type="active site" description="Proton acceptor" evidence="1">
    <location>
        <position position="174"/>
    </location>
</feature>
<feature type="active site" description="Proton acceptor" evidence="1">
    <location>
        <position position="389"/>
    </location>
</feature>
<feature type="sequence conflict" description="In Ref. 5; AAM61186." evidence="4" ref="5">
    <original>A</original>
    <variation>V</variation>
    <location>
        <position position="338"/>
    </location>
</feature>
<proteinExistence type="evidence at protein level"/>
<comment type="function">
    <text evidence="3">Acyltransferase involved in the production of green leaf volatiles (GLVs). Uses acetyl-CoA as substrate, but not malonyl-CoA or benzoyl-CoA. Prefers primary, medium-chain-length, aliphatic alcohols.</text>
</comment>
<comment type="catalytic activity">
    <reaction evidence="2 3">
        <text>(3Z)-hex-3-en-1-ol + acetyl-CoA = (3Z)-hex-3-en-1-yl acetate + CoA</text>
        <dbReference type="Rhea" id="RHEA:28254"/>
        <dbReference type="ChEBI" id="CHEBI:28857"/>
        <dbReference type="ChEBI" id="CHEBI:57287"/>
        <dbReference type="ChEBI" id="CHEBI:57288"/>
        <dbReference type="ChEBI" id="CHEBI:61316"/>
        <dbReference type="EC" id="2.3.1.195"/>
    </reaction>
</comment>
<comment type="activity regulation">
    <text evidence="3">Inhibited by magnesium, calcium, cobalt, zinc and copper.</text>
</comment>
<comment type="biophysicochemical properties">
    <kinetics>
        <KM evidence="2 3">10.5 uM for acetyl-CoA</KM>
        <KM evidence="2 3">165 uM for (3Z)-hex-3-en-ol</KM>
        <KM evidence="2 3">174 uM for 1-octanol</KM>
    </kinetics>
    <phDependence>
        <text evidence="2 3">Optimum pH is 7.1-7.3.</text>
    </phDependence>
</comment>
<comment type="tissue specificity">
    <text evidence="3">Expressed in leaves and stems. Lower levels in flowers and barely detected in roots and siliques.</text>
</comment>
<comment type="induction">
    <text evidence="3">Up-regulated by wounding with a peak 3 hours after wounding.</text>
</comment>
<comment type="disruption phenotype">
    <text evidence="3">Loss of (3Z)-hex-3-en-1-yl acetate production.</text>
</comment>
<comment type="similarity">
    <text evidence="4">Belongs to the plant acyltransferase family.</text>
</comment>
<keyword id="KW-0012">Acyltransferase</keyword>
<keyword id="KW-1185">Reference proteome</keyword>
<keyword id="KW-0808">Transferase</keyword>
<evidence type="ECO:0000255" key="1"/>
<evidence type="ECO:0000269" key="2">
    <source>
    </source>
</evidence>
<evidence type="ECO:0000269" key="3">
    <source>
    </source>
</evidence>
<evidence type="ECO:0000305" key="4"/>
<sequence length="454" mass="50290">MDHQVSLPQSTTTGLSFKVHRQQRELVTPAKPTPRELKPLSDIDDQQGLRFQIPVIFFYRPNLSSDLDPVQVIKKALADALVYYYPFAGRLRELSNRKLAVDCTGEGVLFIEAEADVALAELEEADALLPPFPFLEELLFDVEGSSDVLNTPLLLVQVTRLKCCGFIFALRFNHTMTDGAGLSLFLKSLCELACGLHAPSVPPVWNRHLLTVSASEARVTHTHREYDDQVGIDVVATGHPLVSRSFFFRAEEISAIRKLLPPDLHNTSFEALSSFLWRCRTIALNPDPNTEMRLTCIINSRSKLRNPPLEPGYYGNVFVIPAAIATARDLIEKPLEFALRLIQETKSSVTEDYVRSVTALMATRGRPMFVASGNYIISDLRHFDLGKIDFGPWGKPVYGGTAKAGIALFPGVSFYVPFKNKKGETGTVVAISLPVRAMETFVAELNGVLNVSKG</sequence>
<reference key="1">
    <citation type="journal article" date="2002" name="Plant Physiol.">
        <title>Characterization of an acyltransferase capable of synthesizing benzylbenzoate and other volatile esters in flowers and damaged leaves of Clarkia breweri.</title>
        <authorList>
            <person name="D'Auria J.C."/>
            <person name="Chen F."/>
            <person name="Pichersky E."/>
        </authorList>
    </citation>
    <scope>NUCLEOTIDE SEQUENCE [MRNA]</scope>
    <scope>CATALYTIC ACTIVITY</scope>
    <scope>BIOPHYSICOCHEMICAL PROPERTIES</scope>
</reference>
<reference key="2">
    <citation type="journal article" date="2007" name="Plant J.">
        <title>Characterization of a BAHD acyltransferase responsible for producing the green leaf volatile (Z)-3-hexen-1-yl acetate in Arabidopsis thaliana.</title>
        <authorList>
            <person name="D'Auria J.C."/>
            <person name="Pichersky E."/>
            <person name="Schaub A."/>
            <person name="Hansel A."/>
            <person name="Gershenzon J."/>
        </authorList>
    </citation>
    <scope>NUCLEOTIDE SEQUENCE [MRNA]</scope>
    <scope>CATALYTIC ACTIVITY</scope>
    <scope>DISRUPTION PHENOTYPE</scope>
    <scope>BIOPHYSICOCHEMICAL PROPERTIES</scope>
    <scope>ACTIVITY REGULATION</scope>
    <scope>TISSUE SPECIFICITY</scope>
    <scope>INDUCTION BY WOUNDING</scope>
    <scope>FUNCTION</scope>
    <source>
        <strain>cv. Landsberg erecta</strain>
    </source>
</reference>
<reference key="3">
    <citation type="journal article" date="2000" name="Nature">
        <title>Sequence and analysis of chromosome 3 of the plant Arabidopsis thaliana.</title>
        <authorList>
            <person name="Salanoubat M."/>
            <person name="Lemcke K."/>
            <person name="Rieger M."/>
            <person name="Ansorge W."/>
            <person name="Unseld M."/>
            <person name="Fartmann B."/>
            <person name="Valle G."/>
            <person name="Bloecker H."/>
            <person name="Perez-Alonso M."/>
            <person name="Obermaier B."/>
            <person name="Delseny M."/>
            <person name="Boutry M."/>
            <person name="Grivell L.A."/>
            <person name="Mache R."/>
            <person name="Puigdomenech P."/>
            <person name="De Simone V."/>
            <person name="Choisne N."/>
            <person name="Artiguenave F."/>
            <person name="Robert C."/>
            <person name="Brottier P."/>
            <person name="Wincker P."/>
            <person name="Cattolico L."/>
            <person name="Weissenbach J."/>
            <person name="Saurin W."/>
            <person name="Quetier F."/>
            <person name="Schaefer M."/>
            <person name="Mueller-Auer S."/>
            <person name="Gabel C."/>
            <person name="Fuchs M."/>
            <person name="Benes V."/>
            <person name="Wurmbach E."/>
            <person name="Drzonek H."/>
            <person name="Erfle H."/>
            <person name="Jordan N."/>
            <person name="Bangert S."/>
            <person name="Wiedelmann R."/>
            <person name="Kranz H."/>
            <person name="Voss H."/>
            <person name="Holland R."/>
            <person name="Brandt P."/>
            <person name="Nyakatura G."/>
            <person name="Vezzi A."/>
            <person name="D'Angelo M."/>
            <person name="Pallavicini A."/>
            <person name="Toppo S."/>
            <person name="Simionati B."/>
            <person name="Conrad A."/>
            <person name="Hornischer K."/>
            <person name="Kauer G."/>
            <person name="Loehnert T.-H."/>
            <person name="Nordsiek G."/>
            <person name="Reichelt J."/>
            <person name="Scharfe M."/>
            <person name="Schoen O."/>
            <person name="Bargues M."/>
            <person name="Terol J."/>
            <person name="Climent J."/>
            <person name="Navarro P."/>
            <person name="Collado C."/>
            <person name="Perez-Perez A."/>
            <person name="Ottenwaelder B."/>
            <person name="Duchemin D."/>
            <person name="Cooke R."/>
            <person name="Laudie M."/>
            <person name="Berger-Llauro C."/>
            <person name="Purnelle B."/>
            <person name="Masuy D."/>
            <person name="de Haan M."/>
            <person name="Maarse A.C."/>
            <person name="Alcaraz J.-P."/>
            <person name="Cottet A."/>
            <person name="Casacuberta E."/>
            <person name="Monfort A."/>
            <person name="Argiriou A."/>
            <person name="Flores M."/>
            <person name="Liguori R."/>
            <person name="Vitale D."/>
            <person name="Mannhaupt G."/>
            <person name="Haase D."/>
            <person name="Schoof H."/>
            <person name="Rudd S."/>
            <person name="Zaccaria P."/>
            <person name="Mewes H.-W."/>
            <person name="Mayer K.F.X."/>
            <person name="Kaul S."/>
            <person name="Town C.D."/>
            <person name="Koo H.L."/>
            <person name="Tallon L.J."/>
            <person name="Jenkins J."/>
            <person name="Rooney T."/>
            <person name="Rizzo M."/>
            <person name="Walts A."/>
            <person name="Utterback T."/>
            <person name="Fujii C.Y."/>
            <person name="Shea T.P."/>
            <person name="Creasy T.H."/>
            <person name="Haas B."/>
            <person name="Maiti R."/>
            <person name="Wu D."/>
            <person name="Peterson J."/>
            <person name="Van Aken S."/>
            <person name="Pai G."/>
            <person name="Militscher J."/>
            <person name="Sellers P."/>
            <person name="Gill J.E."/>
            <person name="Feldblyum T.V."/>
            <person name="Preuss D."/>
            <person name="Lin X."/>
            <person name="Nierman W.C."/>
            <person name="Salzberg S.L."/>
            <person name="White O."/>
            <person name="Venter J.C."/>
            <person name="Fraser C.M."/>
            <person name="Kaneko T."/>
            <person name="Nakamura Y."/>
            <person name="Sato S."/>
            <person name="Kato T."/>
            <person name="Asamizu E."/>
            <person name="Sasamoto S."/>
            <person name="Kimura T."/>
            <person name="Idesawa K."/>
            <person name="Kawashima K."/>
            <person name="Kishida Y."/>
            <person name="Kiyokawa C."/>
            <person name="Kohara M."/>
            <person name="Matsumoto M."/>
            <person name="Matsuno A."/>
            <person name="Muraki A."/>
            <person name="Nakayama S."/>
            <person name="Nakazaki N."/>
            <person name="Shinpo S."/>
            <person name="Takeuchi C."/>
            <person name="Wada T."/>
            <person name="Watanabe A."/>
            <person name="Yamada M."/>
            <person name="Yasuda M."/>
            <person name="Tabata S."/>
        </authorList>
    </citation>
    <scope>NUCLEOTIDE SEQUENCE [LARGE SCALE GENOMIC DNA]</scope>
    <source>
        <strain>cv. Columbia</strain>
    </source>
</reference>
<reference key="4">
    <citation type="journal article" date="2017" name="Plant J.">
        <title>Araport11: a complete reannotation of the Arabidopsis thaliana reference genome.</title>
        <authorList>
            <person name="Cheng C.Y."/>
            <person name="Krishnakumar V."/>
            <person name="Chan A.P."/>
            <person name="Thibaud-Nissen F."/>
            <person name="Schobel S."/>
            <person name="Town C.D."/>
        </authorList>
    </citation>
    <scope>GENOME REANNOTATION</scope>
    <source>
        <strain>cv. Columbia</strain>
    </source>
</reference>
<reference key="5">
    <citation type="submission" date="2002-03" db="EMBL/GenBank/DDBJ databases">
        <title>Full-length cDNA from Arabidopsis thaliana.</title>
        <authorList>
            <person name="Brover V.V."/>
            <person name="Troukhan M.E."/>
            <person name="Alexandrov N.A."/>
            <person name="Lu Y.-P."/>
            <person name="Flavell R.B."/>
            <person name="Feldmann K.A."/>
        </authorList>
    </citation>
    <scope>NUCLEOTIDE SEQUENCE [LARGE SCALE MRNA]</scope>
</reference>
<organism>
    <name type="scientific">Arabidopsis thaliana</name>
    <name type="common">Mouse-ear cress</name>
    <dbReference type="NCBI Taxonomy" id="3702"/>
    <lineage>
        <taxon>Eukaryota</taxon>
        <taxon>Viridiplantae</taxon>
        <taxon>Streptophyta</taxon>
        <taxon>Embryophyta</taxon>
        <taxon>Tracheophyta</taxon>
        <taxon>Spermatophyta</taxon>
        <taxon>Magnoliopsida</taxon>
        <taxon>eudicotyledons</taxon>
        <taxon>Gunneridae</taxon>
        <taxon>Pentapetalae</taxon>
        <taxon>rosids</taxon>
        <taxon>malvids</taxon>
        <taxon>Brassicales</taxon>
        <taxon>Brassicaceae</taxon>
        <taxon>Camelineae</taxon>
        <taxon>Arabidopsis</taxon>
    </lineage>
</organism>
<accession>Q9SRQ2</accession>
<accession>Q8LFV6</accession>
<name>CHAT_ARATH</name>
<protein>
    <recommendedName>
        <fullName>(Z)-3-hexen-1-ol acetyltransferase</fullName>
        <ecNumber>2.3.1.195</ecNumber>
    </recommendedName>
</protein>
<gene>
    <name type="primary">CHAT</name>
    <name type="ordered locus">At3g03480</name>
    <name type="ORF">T21P5.10</name>
</gene>